<organism>
    <name type="scientific">Methanopyrus kandleri (strain AV19 / DSM 6324 / JCM 9639 / NBRC 100938)</name>
    <dbReference type="NCBI Taxonomy" id="190192"/>
    <lineage>
        <taxon>Archaea</taxon>
        <taxon>Methanobacteriati</taxon>
        <taxon>Methanobacteriota</taxon>
        <taxon>Methanomada group</taxon>
        <taxon>Methanopyri</taxon>
        <taxon>Methanopyrales</taxon>
        <taxon>Methanopyraceae</taxon>
        <taxon>Methanopyrus</taxon>
    </lineage>
</organism>
<protein>
    <recommendedName>
        <fullName evidence="1">Large ribosomal subunit protein eL34</fullName>
    </recommendedName>
    <alternativeName>
        <fullName evidence="2">50S ribosomal protein L34e</fullName>
    </alternativeName>
</protein>
<evidence type="ECO:0000255" key="1">
    <source>
        <dbReference type="HAMAP-Rule" id="MF_00349"/>
    </source>
</evidence>
<evidence type="ECO:0000305" key="2"/>
<reference key="1">
    <citation type="journal article" date="2002" name="Proc. Natl. Acad. Sci. U.S.A.">
        <title>The complete genome of hyperthermophile Methanopyrus kandleri AV19 and monophyly of archaeal methanogens.</title>
        <authorList>
            <person name="Slesarev A.I."/>
            <person name="Mezhevaya K.V."/>
            <person name="Makarova K.S."/>
            <person name="Polushin N.N."/>
            <person name="Shcherbinina O.V."/>
            <person name="Shakhova V.V."/>
            <person name="Belova G.I."/>
            <person name="Aravind L."/>
            <person name="Natale D.A."/>
            <person name="Rogozin I.B."/>
            <person name="Tatusov R.L."/>
            <person name="Wolf Y.I."/>
            <person name="Stetter K.O."/>
            <person name="Malykh A.G."/>
            <person name="Koonin E.V."/>
            <person name="Kozyavkin S.A."/>
        </authorList>
    </citation>
    <scope>NUCLEOTIDE SEQUENCE [LARGE SCALE GENOMIC DNA]</scope>
    <source>
        <strain>AV19 / DSM 6324 / JCM 9639 / NBRC 100938</strain>
    </source>
</reference>
<proteinExistence type="inferred from homology"/>
<sequence>MPAPRYRSRSCRRVYKRTPGGRTVIHFEKKIPNWPKCGACGRRLNGVMRGRNVELKNAPKTQKRPNRPYGGVLCPECARKLIKDKVRYKFWERKREQPWLPVLPDEEPPEPEE</sequence>
<keyword id="KW-1185">Reference proteome</keyword>
<keyword id="KW-0687">Ribonucleoprotein</keyword>
<keyword id="KW-0689">Ribosomal protein</keyword>
<comment type="similarity">
    <text evidence="1">Belongs to the eukaryotic ribosomal protein eL34 family.</text>
</comment>
<dbReference type="EMBL" id="AE009439">
    <property type="protein sequence ID" value="AAM01240.1"/>
    <property type="molecule type" value="Genomic_DNA"/>
</dbReference>
<dbReference type="RefSeq" id="WP_011018395.1">
    <property type="nucleotide sequence ID" value="NC_003551.1"/>
</dbReference>
<dbReference type="SMR" id="Q8TZB2"/>
<dbReference type="FunCoup" id="Q8TZB2">
    <property type="interactions" value="146"/>
</dbReference>
<dbReference type="STRING" id="190192.MK0023"/>
<dbReference type="PaxDb" id="190192-MK0023"/>
<dbReference type="EnsemblBacteria" id="AAM01240">
    <property type="protein sequence ID" value="AAM01240"/>
    <property type="gene ID" value="MK0023"/>
</dbReference>
<dbReference type="GeneID" id="1477325"/>
<dbReference type="KEGG" id="mka:MK0023"/>
<dbReference type="PATRIC" id="fig|190192.8.peg.23"/>
<dbReference type="HOGENOM" id="CLU_118652_2_0_2"/>
<dbReference type="InParanoid" id="Q8TZB2"/>
<dbReference type="OrthoDB" id="43096at2157"/>
<dbReference type="Proteomes" id="UP000001826">
    <property type="component" value="Chromosome"/>
</dbReference>
<dbReference type="GO" id="GO:1990904">
    <property type="term" value="C:ribonucleoprotein complex"/>
    <property type="evidence" value="ECO:0007669"/>
    <property type="project" value="UniProtKB-KW"/>
</dbReference>
<dbReference type="GO" id="GO:0005840">
    <property type="term" value="C:ribosome"/>
    <property type="evidence" value="ECO:0007669"/>
    <property type="project" value="UniProtKB-KW"/>
</dbReference>
<dbReference type="GO" id="GO:0003735">
    <property type="term" value="F:structural constituent of ribosome"/>
    <property type="evidence" value="ECO:0007669"/>
    <property type="project" value="InterPro"/>
</dbReference>
<dbReference type="GO" id="GO:0006412">
    <property type="term" value="P:translation"/>
    <property type="evidence" value="ECO:0007669"/>
    <property type="project" value="UniProtKB-UniRule"/>
</dbReference>
<dbReference type="Gene3D" id="6.20.340.10">
    <property type="match status" value="1"/>
</dbReference>
<dbReference type="HAMAP" id="MF_00349">
    <property type="entry name" value="Ribosomal_eL34"/>
    <property type="match status" value="1"/>
</dbReference>
<dbReference type="InterPro" id="IPR008195">
    <property type="entry name" value="Ribosomal_eL34"/>
</dbReference>
<dbReference type="InterPro" id="IPR038562">
    <property type="entry name" value="Ribosomal_eL34_C_sf"/>
</dbReference>
<dbReference type="InterPro" id="IPR018065">
    <property type="entry name" value="Ribosomal_eL34_CS"/>
</dbReference>
<dbReference type="InterPro" id="IPR047868">
    <property type="entry name" value="Ribosomal_L34e_arc-type"/>
</dbReference>
<dbReference type="NCBIfam" id="NF003143">
    <property type="entry name" value="PRK04059.1"/>
    <property type="match status" value="1"/>
</dbReference>
<dbReference type="PANTHER" id="PTHR10759">
    <property type="entry name" value="60S RIBOSOMAL PROTEIN L34"/>
    <property type="match status" value="1"/>
</dbReference>
<dbReference type="Pfam" id="PF01199">
    <property type="entry name" value="Ribosomal_L34e"/>
    <property type="match status" value="1"/>
</dbReference>
<dbReference type="PRINTS" id="PR01250">
    <property type="entry name" value="RIBOSOMALL34"/>
</dbReference>
<dbReference type="PROSITE" id="PS01145">
    <property type="entry name" value="RIBOSOMAL_L34E"/>
    <property type="match status" value="1"/>
</dbReference>
<name>RL34_METKA</name>
<accession>Q8TZB2</accession>
<gene>
    <name evidence="1" type="primary">rpl34e</name>
    <name type="ordered locus">MK0023</name>
</gene>
<feature type="chain" id="PRO_0000131849" description="Large ribosomal subunit protein eL34">
    <location>
        <begin position="1"/>
        <end position="113"/>
    </location>
</feature>